<accession>Q7VTK0</accession>
<sequence length="636" mass="69632">MTHTAAGAPRDAKTAIHAPSSRMALMLGALGVVYGDIGTSPLYTLRACLNTIDDLQPAHVLGVLSILFWLLMIVVSLKYVTLVLRADNRGEGGTLALLELAVRGREGRARWLLIVLGIFGAALFYGDSMITPAISVLSALEGISIVSHTLEPWVVPVALVVLVALFAIQSHGTGAVGKLFGPIMALWFATLAVLGGYQIWLTPEVLAALNPVWALRFIAEFPVMSFLLLGAVVLALTGAEALYADMGHFGRPAIRRAWFAMVLPALTLCYFGQGALLLRDPAAIRNPFFLMAPEWGLAALVGLATVATVVASQAVISGAFSVTRQAVQLGFWPRMQILHTSAVEKGQIYLPQVNALLLCAVLVLVLLFRNSENLAAAYGFAVTGTMLTTSVLAFAVLPRDSTGGKRVLWMVLLGALLVIDILLFGANIFKIHEGGWLPLLVGVVVFTLMMTWRRGRRLLADMQARDRQPLREFMTQLEAFPPARVQGTAIFMTMNAGNVPPALLHNLKHNKVLHDHVLFLSIRVADVPYVSEDERFEMHKISASSWQASINYGFKEDPDVPDALRQVAEAYPEIDLEPMRTSFYLSRQTVVAARRPAMARWRRALFAFMARNSTRSTRFFKIPPNRVVEMGMQVEL</sequence>
<reference key="1">
    <citation type="journal article" date="2003" name="Nat. Genet.">
        <title>Comparative analysis of the genome sequences of Bordetella pertussis, Bordetella parapertussis and Bordetella bronchiseptica.</title>
        <authorList>
            <person name="Parkhill J."/>
            <person name="Sebaihia M."/>
            <person name="Preston A."/>
            <person name="Murphy L.D."/>
            <person name="Thomson N.R."/>
            <person name="Harris D.E."/>
            <person name="Holden M.T.G."/>
            <person name="Churcher C.M."/>
            <person name="Bentley S.D."/>
            <person name="Mungall K.L."/>
            <person name="Cerdeno-Tarraga A.-M."/>
            <person name="Temple L."/>
            <person name="James K.D."/>
            <person name="Harris B."/>
            <person name="Quail M.A."/>
            <person name="Achtman M."/>
            <person name="Atkin R."/>
            <person name="Baker S."/>
            <person name="Basham D."/>
            <person name="Bason N."/>
            <person name="Cherevach I."/>
            <person name="Chillingworth T."/>
            <person name="Collins M."/>
            <person name="Cronin A."/>
            <person name="Davis P."/>
            <person name="Doggett J."/>
            <person name="Feltwell T."/>
            <person name="Goble A."/>
            <person name="Hamlin N."/>
            <person name="Hauser H."/>
            <person name="Holroyd S."/>
            <person name="Jagels K."/>
            <person name="Leather S."/>
            <person name="Moule S."/>
            <person name="Norberczak H."/>
            <person name="O'Neil S."/>
            <person name="Ormond D."/>
            <person name="Price C."/>
            <person name="Rabbinowitsch E."/>
            <person name="Rutter S."/>
            <person name="Sanders M."/>
            <person name="Saunders D."/>
            <person name="Seeger K."/>
            <person name="Sharp S."/>
            <person name="Simmonds M."/>
            <person name="Skelton J."/>
            <person name="Squares R."/>
            <person name="Squares S."/>
            <person name="Stevens K."/>
            <person name="Unwin L."/>
            <person name="Whitehead S."/>
            <person name="Barrell B.G."/>
            <person name="Maskell D.J."/>
        </authorList>
    </citation>
    <scope>NUCLEOTIDE SEQUENCE [LARGE SCALE GENOMIC DNA]</scope>
    <source>
        <strain>Tohama I / ATCC BAA-589 / NCTC 13251</strain>
    </source>
</reference>
<dbReference type="EMBL" id="BX640421">
    <property type="protein sequence ID" value="CAE43795.1"/>
    <property type="molecule type" value="Genomic_DNA"/>
</dbReference>
<dbReference type="RefSeq" id="NP_882051.1">
    <property type="nucleotide sequence ID" value="NC_002929.2"/>
</dbReference>
<dbReference type="RefSeq" id="WP_003820366.1">
    <property type="nucleotide sequence ID" value="NZ_CP039022.1"/>
</dbReference>
<dbReference type="STRING" id="257313.BP3536"/>
<dbReference type="PaxDb" id="257313-BP3536"/>
<dbReference type="KEGG" id="bpe:BP3536"/>
<dbReference type="PATRIC" id="fig|257313.5.peg.3828"/>
<dbReference type="eggNOG" id="COG3158">
    <property type="taxonomic scope" value="Bacteria"/>
</dbReference>
<dbReference type="HOGENOM" id="CLU_008142_4_2_4"/>
<dbReference type="Proteomes" id="UP000002676">
    <property type="component" value="Chromosome"/>
</dbReference>
<dbReference type="GO" id="GO:0005886">
    <property type="term" value="C:plasma membrane"/>
    <property type="evidence" value="ECO:0007669"/>
    <property type="project" value="UniProtKB-SubCell"/>
</dbReference>
<dbReference type="GO" id="GO:0015079">
    <property type="term" value="F:potassium ion transmembrane transporter activity"/>
    <property type="evidence" value="ECO:0007669"/>
    <property type="project" value="UniProtKB-UniRule"/>
</dbReference>
<dbReference type="GO" id="GO:0015293">
    <property type="term" value="F:symporter activity"/>
    <property type="evidence" value="ECO:0007669"/>
    <property type="project" value="UniProtKB-UniRule"/>
</dbReference>
<dbReference type="HAMAP" id="MF_01522">
    <property type="entry name" value="Kup"/>
    <property type="match status" value="1"/>
</dbReference>
<dbReference type="InterPro" id="IPR003855">
    <property type="entry name" value="K+_transporter"/>
</dbReference>
<dbReference type="InterPro" id="IPR053952">
    <property type="entry name" value="K_trans_C"/>
</dbReference>
<dbReference type="InterPro" id="IPR053951">
    <property type="entry name" value="K_trans_N"/>
</dbReference>
<dbReference type="InterPro" id="IPR023051">
    <property type="entry name" value="Kup"/>
</dbReference>
<dbReference type="PANTHER" id="PTHR30540:SF79">
    <property type="entry name" value="LOW AFFINITY POTASSIUM TRANSPORT SYSTEM PROTEIN KUP"/>
    <property type="match status" value="1"/>
</dbReference>
<dbReference type="PANTHER" id="PTHR30540">
    <property type="entry name" value="OSMOTIC STRESS POTASSIUM TRANSPORTER"/>
    <property type="match status" value="1"/>
</dbReference>
<dbReference type="Pfam" id="PF02705">
    <property type="entry name" value="K_trans"/>
    <property type="match status" value="1"/>
</dbReference>
<dbReference type="Pfam" id="PF22776">
    <property type="entry name" value="K_trans_C"/>
    <property type="match status" value="1"/>
</dbReference>
<feature type="chain" id="PRO_0000208997" description="Probable potassium transport system protein Kup">
    <location>
        <begin position="1"/>
        <end position="636"/>
    </location>
</feature>
<feature type="transmembrane region" description="Helical" evidence="1">
    <location>
        <begin position="23"/>
        <end position="43"/>
    </location>
</feature>
<feature type="transmembrane region" description="Helical" evidence="1">
    <location>
        <begin position="57"/>
        <end position="77"/>
    </location>
</feature>
<feature type="transmembrane region" description="Helical" evidence="1">
    <location>
        <begin position="111"/>
        <end position="131"/>
    </location>
</feature>
<feature type="transmembrane region" description="Helical" evidence="1">
    <location>
        <begin position="148"/>
        <end position="168"/>
    </location>
</feature>
<feature type="transmembrane region" description="Helical" evidence="1">
    <location>
        <begin position="179"/>
        <end position="199"/>
    </location>
</feature>
<feature type="transmembrane region" description="Helical" evidence="1">
    <location>
        <begin position="217"/>
        <end position="237"/>
    </location>
</feature>
<feature type="transmembrane region" description="Helical" evidence="1">
    <location>
        <begin position="258"/>
        <end position="278"/>
    </location>
</feature>
<feature type="transmembrane region" description="Helical" evidence="1">
    <location>
        <begin position="287"/>
        <end position="307"/>
    </location>
</feature>
<feature type="transmembrane region" description="Helical" evidence="1">
    <location>
        <begin position="348"/>
        <end position="368"/>
    </location>
</feature>
<feature type="transmembrane region" description="Helical" evidence="1">
    <location>
        <begin position="377"/>
        <end position="397"/>
    </location>
</feature>
<feature type="transmembrane region" description="Helical" evidence="1">
    <location>
        <begin position="409"/>
        <end position="429"/>
    </location>
</feature>
<feature type="transmembrane region" description="Helical" evidence="1">
    <location>
        <begin position="431"/>
        <end position="451"/>
    </location>
</feature>
<name>KUP_BORPE</name>
<evidence type="ECO:0000255" key="1">
    <source>
        <dbReference type="HAMAP-Rule" id="MF_01522"/>
    </source>
</evidence>
<protein>
    <recommendedName>
        <fullName evidence="1">Probable potassium transport system protein Kup</fullName>
    </recommendedName>
</protein>
<keyword id="KW-0997">Cell inner membrane</keyword>
<keyword id="KW-1003">Cell membrane</keyword>
<keyword id="KW-0406">Ion transport</keyword>
<keyword id="KW-0472">Membrane</keyword>
<keyword id="KW-0630">Potassium</keyword>
<keyword id="KW-0633">Potassium transport</keyword>
<keyword id="KW-1185">Reference proteome</keyword>
<keyword id="KW-0769">Symport</keyword>
<keyword id="KW-0812">Transmembrane</keyword>
<keyword id="KW-1133">Transmembrane helix</keyword>
<keyword id="KW-0813">Transport</keyword>
<comment type="function">
    <text evidence="1">Transport of potassium into the cell. Likely operates as a K(+):H(+) symporter.</text>
</comment>
<comment type="catalytic activity">
    <reaction evidence="1">
        <text>K(+)(in) + H(+)(in) = K(+)(out) + H(+)(out)</text>
        <dbReference type="Rhea" id="RHEA:28490"/>
        <dbReference type="ChEBI" id="CHEBI:15378"/>
        <dbReference type="ChEBI" id="CHEBI:29103"/>
    </reaction>
    <physiologicalReaction direction="right-to-left" evidence="1">
        <dbReference type="Rhea" id="RHEA:28492"/>
    </physiologicalReaction>
</comment>
<comment type="subcellular location">
    <subcellularLocation>
        <location evidence="1">Cell inner membrane</location>
        <topology evidence="1">Multi-pass membrane protein</topology>
    </subcellularLocation>
</comment>
<comment type="similarity">
    <text evidence="1">Belongs to the HAK/KUP transporter (TC 2.A.72) family.</text>
</comment>
<gene>
    <name evidence="1" type="primary">kup</name>
    <name type="synonym">trkD</name>
    <name type="ordered locus">BP3536</name>
</gene>
<organism>
    <name type="scientific">Bordetella pertussis (strain Tohama I / ATCC BAA-589 / NCTC 13251)</name>
    <dbReference type="NCBI Taxonomy" id="257313"/>
    <lineage>
        <taxon>Bacteria</taxon>
        <taxon>Pseudomonadati</taxon>
        <taxon>Pseudomonadota</taxon>
        <taxon>Betaproteobacteria</taxon>
        <taxon>Burkholderiales</taxon>
        <taxon>Alcaligenaceae</taxon>
        <taxon>Bordetella</taxon>
    </lineage>
</organism>
<proteinExistence type="inferred from homology"/>